<organism>
    <name type="scientific">Shewanella sp. (strain W3-18-1)</name>
    <dbReference type="NCBI Taxonomy" id="351745"/>
    <lineage>
        <taxon>Bacteria</taxon>
        <taxon>Pseudomonadati</taxon>
        <taxon>Pseudomonadota</taxon>
        <taxon>Gammaproteobacteria</taxon>
        <taxon>Alteromonadales</taxon>
        <taxon>Shewanellaceae</taxon>
        <taxon>Shewanella</taxon>
    </lineage>
</organism>
<feature type="chain" id="PRO_1000060175" description="Na(+)-translocating NADH-quinone reductase subunit D">
    <location>
        <begin position="1"/>
        <end position="210"/>
    </location>
</feature>
<feature type="transmembrane region" description="Helical" evidence="1">
    <location>
        <begin position="14"/>
        <end position="34"/>
    </location>
</feature>
<feature type="transmembrane region" description="Helical" evidence="1">
    <location>
        <begin position="42"/>
        <end position="62"/>
    </location>
</feature>
<feature type="transmembrane region" description="Helical" evidence="1">
    <location>
        <begin position="72"/>
        <end position="92"/>
    </location>
</feature>
<feature type="transmembrane region" description="Helical" evidence="1">
    <location>
        <begin position="103"/>
        <end position="123"/>
    </location>
</feature>
<feature type="transmembrane region" description="Helical" evidence="1">
    <location>
        <begin position="131"/>
        <end position="151"/>
    </location>
</feature>
<feature type="transmembrane region" description="Helical" evidence="1">
    <location>
        <begin position="178"/>
        <end position="198"/>
    </location>
</feature>
<protein>
    <recommendedName>
        <fullName evidence="1">Na(+)-translocating NADH-quinone reductase subunit D</fullName>
        <shortName evidence="1">Na(+)-NQR subunit D</shortName>
        <shortName evidence="1">Na(+)-translocating NQR subunit D</shortName>
        <ecNumber evidence="1">7.2.1.1</ecNumber>
    </recommendedName>
    <alternativeName>
        <fullName evidence="1">NQR complex subunit D</fullName>
    </alternativeName>
    <alternativeName>
        <fullName evidence="1">NQR-1 subunit D</fullName>
    </alternativeName>
</protein>
<sequence>MSDAKELKQVLTGPIVNNNPIALQILGVCSALAVTSKLETALVMALALTAVTAFSNLFISLIRNHIPSSVRIIVQMTIIASLVIVVDQLLQAYAYQISKQLSVFVGLIITNCIVMGRAEAYAMKTPPMMSFMDGIGNGLGYGVILLAVGFVRELFGNGSLFGVQILHKISEGGWYQPNGMLLLPPSAFFLIGILIWIIRTYKPEQVEAKG</sequence>
<evidence type="ECO:0000255" key="1">
    <source>
        <dbReference type="HAMAP-Rule" id="MF_00428"/>
    </source>
</evidence>
<proteinExistence type="inferred from homology"/>
<dbReference type="EC" id="7.2.1.1" evidence="1"/>
<dbReference type="EMBL" id="CP000503">
    <property type="protein sequence ID" value="ABM26048.1"/>
    <property type="molecule type" value="Genomic_DNA"/>
</dbReference>
<dbReference type="RefSeq" id="WP_011790496.1">
    <property type="nucleotide sequence ID" value="NC_008750.1"/>
</dbReference>
<dbReference type="SMR" id="A1RN03"/>
<dbReference type="KEGG" id="shw:Sputw3181_3233"/>
<dbReference type="HOGENOM" id="CLU_046659_1_1_6"/>
<dbReference type="Proteomes" id="UP000002597">
    <property type="component" value="Chromosome"/>
</dbReference>
<dbReference type="GO" id="GO:0005886">
    <property type="term" value="C:plasma membrane"/>
    <property type="evidence" value="ECO:0007669"/>
    <property type="project" value="UniProtKB-SubCell"/>
</dbReference>
<dbReference type="GO" id="GO:0016655">
    <property type="term" value="F:oxidoreductase activity, acting on NAD(P)H, quinone or similar compound as acceptor"/>
    <property type="evidence" value="ECO:0007669"/>
    <property type="project" value="UniProtKB-UniRule"/>
</dbReference>
<dbReference type="GO" id="GO:0006814">
    <property type="term" value="P:sodium ion transport"/>
    <property type="evidence" value="ECO:0007669"/>
    <property type="project" value="UniProtKB-UniRule"/>
</dbReference>
<dbReference type="HAMAP" id="MF_00428">
    <property type="entry name" value="NqrD"/>
    <property type="match status" value="1"/>
</dbReference>
<dbReference type="InterPro" id="IPR011292">
    <property type="entry name" value="NqrD"/>
</dbReference>
<dbReference type="InterPro" id="IPR003667">
    <property type="entry name" value="NqrDE/RnfAE"/>
</dbReference>
<dbReference type="NCBIfam" id="TIGR01939">
    <property type="entry name" value="nqrD"/>
    <property type="match status" value="1"/>
</dbReference>
<dbReference type="NCBIfam" id="NF006777">
    <property type="entry name" value="PRK09292.1"/>
    <property type="match status" value="1"/>
</dbReference>
<dbReference type="NCBIfam" id="NF009070">
    <property type="entry name" value="PRK12405.1"/>
    <property type="match status" value="1"/>
</dbReference>
<dbReference type="PANTHER" id="PTHR30586">
    <property type="entry name" value="ELECTRON TRANSPORT COMPLEX PROTEIN RNFE"/>
    <property type="match status" value="1"/>
</dbReference>
<dbReference type="PANTHER" id="PTHR30586:SF1">
    <property type="entry name" value="NA(+)-TRANSLOCATING NADH-QUINONE REDUCTASE SUBUNIT D"/>
    <property type="match status" value="1"/>
</dbReference>
<dbReference type="Pfam" id="PF02508">
    <property type="entry name" value="Rnf-Nqr"/>
    <property type="match status" value="1"/>
</dbReference>
<dbReference type="PIRSF" id="PIRSF006102">
    <property type="entry name" value="NQR_DE"/>
    <property type="match status" value="1"/>
</dbReference>
<name>NQRD_SHESW</name>
<gene>
    <name evidence="1" type="primary">nqrD</name>
    <name type="ordered locus">Sputw3181_3233</name>
</gene>
<comment type="function">
    <text evidence="1">NQR complex catalyzes the reduction of ubiquinone-1 to ubiquinol by two successive reactions, coupled with the transport of Na(+) ions from the cytoplasm to the periplasm. NqrA to NqrE are probably involved in the second step, the conversion of ubisemiquinone to ubiquinol.</text>
</comment>
<comment type="catalytic activity">
    <reaction evidence="1">
        <text>a ubiquinone + n Na(+)(in) + NADH + H(+) = a ubiquinol + n Na(+)(out) + NAD(+)</text>
        <dbReference type="Rhea" id="RHEA:47748"/>
        <dbReference type="Rhea" id="RHEA-COMP:9565"/>
        <dbReference type="Rhea" id="RHEA-COMP:9566"/>
        <dbReference type="ChEBI" id="CHEBI:15378"/>
        <dbReference type="ChEBI" id="CHEBI:16389"/>
        <dbReference type="ChEBI" id="CHEBI:17976"/>
        <dbReference type="ChEBI" id="CHEBI:29101"/>
        <dbReference type="ChEBI" id="CHEBI:57540"/>
        <dbReference type="ChEBI" id="CHEBI:57945"/>
        <dbReference type="EC" id="7.2.1.1"/>
    </reaction>
</comment>
<comment type="subunit">
    <text evidence="1">Composed of six subunits; NqrA, NqrB, NqrC, NqrD, NqrE and NqrF.</text>
</comment>
<comment type="subcellular location">
    <subcellularLocation>
        <location evidence="1">Cell inner membrane</location>
        <topology evidence="1">Multi-pass membrane protein</topology>
    </subcellularLocation>
</comment>
<comment type="similarity">
    <text evidence="1">Belongs to the NqrDE/RnfAE family.</text>
</comment>
<accession>A1RN03</accession>
<reference key="1">
    <citation type="submission" date="2006-12" db="EMBL/GenBank/DDBJ databases">
        <title>Complete sequence of Shewanella sp. W3-18-1.</title>
        <authorList>
            <consortium name="US DOE Joint Genome Institute"/>
            <person name="Copeland A."/>
            <person name="Lucas S."/>
            <person name="Lapidus A."/>
            <person name="Barry K."/>
            <person name="Detter J.C."/>
            <person name="Glavina del Rio T."/>
            <person name="Hammon N."/>
            <person name="Israni S."/>
            <person name="Dalin E."/>
            <person name="Tice H."/>
            <person name="Pitluck S."/>
            <person name="Chain P."/>
            <person name="Malfatti S."/>
            <person name="Shin M."/>
            <person name="Vergez L."/>
            <person name="Schmutz J."/>
            <person name="Larimer F."/>
            <person name="Land M."/>
            <person name="Hauser L."/>
            <person name="Kyrpides N."/>
            <person name="Lykidis A."/>
            <person name="Tiedje J."/>
            <person name="Richardson P."/>
        </authorList>
    </citation>
    <scope>NUCLEOTIDE SEQUENCE [LARGE SCALE GENOMIC DNA]</scope>
    <source>
        <strain>W3-18-1</strain>
    </source>
</reference>
<keyword id="KW-0997">Cell inner membrane</keyword>
<keyword id="KW-1003">Cell membrane</keyword>
<keyword id="KW-0406">Ion transport</keyword>
<keyword id="KW-0472">Membrane</keyword>
<keyword id="KW-0520">NAD</keyword>
<keyword id="KW-0915">Sodium</keyword>
<keyword id="KW-0739">Sodium transport</keyword>
<keyword id="KW-1278">Translocase</keyword>
<keyword id="KW-0812">Transmembrane</keyword>
<keyword id="KW-1133">Transmembrane helix</keyword>
<keyword id="KW-0813">Transport</keyword>
<keyword id="KW-0830">Ubiquinone</keyword>